<gene>
    <name type="primary">UBP4</name>
    <name type="ordered locus">At2g22310</name>
    <name type="ORF">T26C19.3</name>
</gene>
<protein>
    <recommendedName>
        <fullName>Ubiquitin carboxyl-terminal hydrolase 4</fullName>
        <ecNumber>3.4.19.12</ecNumber>
    </recommendedName>
    <alternativeName>
        <fullName>Deubiquitinating enzyme 4</fullName>
        <shortName>AtUBP4</shortName>
    </alternativeName>
    <alternativeName>
        <fullName>Ubiquitin thioesterase 4</fullName>
    </alternativeName>
    <alternativeName>
        <fullName>Ubiquitin-specific-processing protease 4</fullName>
    </alternativeName>
</protein>
<comment type="function">
    <text evidence="4 6">Recognizes and hydrolyzes the peptide bond at the C-terminal Gly of ubiquitin. Involved in the processing of poly-ubiquitin precursors as well as that of ubiquitinated proteins. Required for the correct development of pollen.</text>
</comment>
<comment type="catalytic activity">
    <reaction>
        <text>Thiol-dependent hydrolysis of ester, thioester, amide, peptide and isopeptide bonds formed by the C-terminal Gly of ubiquitin (a 76-residue protein attached to proteins as an intracellular targeting signal).</text>
        <dbReference type="EC" id="3.4.19.12"/>
    </reaction>
</comment>
<comment type="subcellular location">
    <subcellularLocation>
        <location evidence="7">Nucleus</location>
    </subcellularLocation>
</comment>
<comment type="alternative products">
    <event type="alternative splicing"/>
    <isoform>
        <id>Q8LAM0-1</id>
        <name>1</name>
        <sequence type="displayed"/>
    </isoform>
    <text>A number of isoforms are produced. According to EST sequences.</text>
</comment>
<comment type="tissue specificity">
    <text evidence="7">Constitutively and ubiquitously expressed.</text>
</comment>
<comment type="similarity">
    <text evidence="8">Belongs to the peptidase C19 family.</text>
</comment>
<dbReference type="EC" id="3.4.19.12"/>
<dbReference type="EMBL" id="U76846">
    <property type="protein sequence ID" value="AAB67967.1"/>
    <property type="molecule type" value="mRNA"/>
</dbReference>
<dbReference type="EMBL" id="AC007168">
    <property type="protein sequence ID" value="AAD23612.1"/>
    <property type="molecule type" value="Genomic_DNA"/>
</dbReference>
<dbReference type="EMBL" id="CP002685">
    <property type="protein sequence ID" value="AEC07291.1"/>
    <property type="molecule type" value="Genomic_DNA"/>
</dbReference>
<dbReference type="EMBL" id="AY048261">
    <property type="protein sequence ID" value="AAK82523.1"/>
    <property type="molecule type" value="mRNA"/>
</dbReference>
<dbReference type="EMBL" id="AY072625">
    <property type="protein sequence ID" value="AAL62016.1"/>
    <property type="molecule type" value="mRNA"/>
</dbReference>
<dbReference type="EMBL" id="AY087731">
    <property type="protein sequence ID" value="AAM65268.1"/>
    <property type="molecule type" value="mRNA"/>
</dbReference>
<dbReference type="PIR" id="B84611">
    <property type="entry name" value="B84611"/>
</dbReference>
<dbReference type="RefSeq" id="NP_565532.1">
    <molecule id="Q8LAM0-1"/>
    <property type="nucleotide sequence ID" value="NM_127796.3"/>
</dbReference>
<dbReference type="SMR" id="Q8LAM0"/>
<dbReference type="FunCoup" id="Q8LAM0">
    <property type="interactions" value="3415"/>
</dbReference>
<dbReference type="STRING" id="3702.Q8LAM0"/>
<dbReference type="MEROPS" id="C19.092"/>
<dbReference type="iPTMnet" id="Q8LAM0"/>
<dbReference type="PaxDb" id="3702-AT2G22310.2"/>
<dbReference type="ProteomicsDB" id="245256">
    <molecule id="Q8LAM0-1"/>
</dbReference>
<dbReference type="EnsemblPlants" id="AT2G22310.1">
    <molecule id="Q8LAM0-1"/>
    <property type="protein sequence ID" value="AT2G22310.1"/>
    <property type="gene ID" value="AT2G22310"/>
</dbReference>
<dbReference type="GeneID" id="816763"/>
<dbReference type="Gramene" id="AT2G22310.1">
    <molecule id="Q8LAM0-1"/>
    <property type="protein sequence ID" value="AT2G22310.1"/>
    <property type="gene ID" value="AT2G22310"/>
</dbReference>
<dbReference type="KEGG" id="ath:AT2G22310"/>
<dbReference type="Araport" id="AT2G22310"/>
<dbReference type="TAIR" id="AT2G22310">
    <property type="gene designation" value="UBP4"/>
</dbReference>
<dbReference type="eggNOG" id="KOG1864">
    <property type="taxonomic scope" value="Eukaryota"/>
</dbReference>
<dbReference type="HOGENOM" id="CLU_008279_2_0_1"/>
<dbReference type="InParanoid" id="Q8LAM0"/>
<dbReference type="OMA" id="KSHNFWL"/>
<dbReference type="PhylomeDB" id="Q8LAM0"/>
<dbReference type="PRO" id="PR:Q8LAM0"/>
<dbReference type="Proteomes" id="UP000006548">
    <property type="component" value="Chromosome 2"/>
</dbReference>
<dbReference type="ExpressionAtlas" id="Q8LAM0">
    <property type="expression patterns" value="baseline and differential"/>
</dbReference>
<dbReference type="GO" id="GO:0005634">
    <property type="term" value="C:nucleus"/>
    <property type="evidence" value="ECO:0007669"/>
    <property type="project" value="UniProtKB-SubCell"/>
</dbReference>
<dbReference type="GO" id="GO:0004843">
    <property type="term" value="F:cysteine-type deubiquitinase activity"/>
    <property type="evidence" value="ECO:0007669"/>
    <property type="project" value="UniProtKB-EC"/>
</dbReference>
<dbReference type="GO" id="GO:0016579">
    <property type="term" value="P:protein deubiquitination"/>
    <property type="evidence" value="ECO:0007669"/>
    <property type="project" value="InterPro"/>
</dbReference>
<dbReference type="GO" id="GO:0006508">
    <property type="term" value="P:proteolysis"/>
    <property type="evidence" value="ECO:0007669"/>
    <property type="project" value="UniProtKB-KW"/>
</dbReference>
<dbReference type="CDD" id="cd02663">
    <property type="entry name" value="Peptidase_C19G"/>
    <property type="match status" value="1"/>
</dbReference>
<dbReference type="FunFam" id="3.90.70.10:FF:000035">
    <property type="entry name" value="Ubiquitin carboxyl-terminal hydrolase 3"/>
    <property type="match status" value="1"/>
</dbReference>
<dbReference type="Gene3D" id="3.90.70.10">
    <property type="entry name" value="Cysteine proteinases"/>
    <property type="match status" value="1"/>
</dbReference>
<dbReference type="InterPro" id="IPR038765">
    <property type="entry name" value="Papain-like_cys_pep_sf"/>
</dbReference>
<dbReference type="InterPro" id="IPR050164">
    <property type="entry name" value="Peptidase_C19"/>
</dbReference>
<dbReference type="InterPro" id="IPR001394">
    <property type="entry name" value="Peptidase_C19_UCH"/>
</dbReference>
<dbReference type="InterPro" id="IPR018200">
    <property type="entry name" value="USP_CS"/>
</dbReference>
<dbReference type="InterPro" id="IPR028889">
    <property type="entry name" value="USP_dom"/>
</dbReference>
<dbReference type="PANTHER" id="PTHR24006:SF733">
    <property type="entry name" value="RE52890P"/>
    <property type="match status" value="1"/>
</dbReference>
<dbReference type="PANTHER" id="PTHR24006">
    <property type="entry name" value="UBIQUITIN CARBOXYL-TERMINAL HYDROLASE"/>
    <property type="match status" value="1"/>
</dbReference>
<dbReference type="Pfam" id="PF00443">
    <property type="entry name" value="UCH"/>
    <property type="match status" value="1"/>
</dbReference>
<dbReference type="SUPFAM" id="SSF54001">
    <property type="entry name" value="Cysteine proteinases"/>
    <property type="match status" value="1"/>
</dbReference>
<dbReference type="PROSITE" id="PS00972">
    <property type="entry name" value="USP_1"/>
    <property type="match status" value="1"/>
</dbReference>
<dbReference type="PROSITE" id="PS00973">
    <property type="entry name" value="USP_2"/>
    <property type="match status" value="1"/>
</dbReference>
<dbReference type="PROSITE" id="PS50235">
    <property type="entry name" value="USP_3"/>
    <property type="match status" value="1"/>
</dbReference>
<proteinExistence type="evidence at protein level"/>
<reference key="1">
    <citation type="journal article" date="1997" name="Mol. Gen. Genet.">
        <title>AtUBP3 and AtUBP4 are two closely related Arabidopsis thaliana ubiquitin-specific proteases present in the nucleus.</title>
        <authorList>
            <person name="Chandler J.S."/>
            <person name="McArdle B."/>
            <person name="Callis J."/>
        </authorList>
    </citation>
    <scope>NUCLEOTIDE SEQUENCE [MRNA]</scope>
    <scope>SUBCELLULAR LOCATION</scope>
    <scope>MUTAGENESIS OF CYS-32</scope>
    <scope>TISSUE SPECIFICITY</scope>
    <source>
        <strain>cv. Landsberg erecta</strain>
    </source>
</reference>
<reference key="2">
    <citation type="journal article" date="1999" name="Nature">
        <title>Sequence and analysis of chromosome 2 of the plant Arabidopsis thaliana.</title>
        <authorList>
            <person name="Lin X."/>
            <person name="Kaul S."/>
            <person name="Rounsley S.D."/>
            <person name="Shea T.P."/>
            <person name="Benito M.-I."/>
            <person name="Town C.D."/>
            <person name="Fujii C.Y."/>
            <person name="Mason T.M."/>
            <person name="Bowman C.L."/>
            <person name="Barnstead M.E."/>
            <person name="Feldblyum T.V."/>
            <person name="Buell C.R."/>
            <person name="Ketchum K.A."/>
            <person name="Lee J.J."/>
            <person name="Ronning C.M."/>
            <person name="Koo H.L."/>
            <person name="Moffat K.S."/>
            <person name="Cronin L.A."/>
            <person name="Shen M."/>
            <person name="Pai G."/>
            <person name="Van Aken S."/>
            <person name="Umayam L."/>
            <person name="Tallon L.J."/>
            <person name="Gill J.E."/>
            <person name="Adams M.D."/>
            <person name="Carrera A.J."/>
            <person name="Creasy T.H."/>
            <person name="Goodman H.M."/>
            <person name="Somerville C.R."/>
            <person name="Copenhaver G.P."/>
            <person name="Preuss D."/>
            <person name="Nierman W.C."/>
            <person name="White O."/>
            <person name="Eisen J.A."/>
            <person name="Salzberg S.L."/>
            <person name="Fraser C.M."/>
            <person name="Venter J.C."/>
        </authorList>
    </citation>
    <scope>NUCLEOTIDE SEQUENCE [LARGE SCALE GENOMIC DNA]</scope>
    <source>
        <strain>cv. Columbia</strain>
    </source>
</reference>
<reference key="3">
    <citation type="journal article" date="2017" name="Plant J.">
        <title>Araport11: a complete reannotation of the Arabidopsis thaliana reference genome.</title>
        <authorList>
            <person name="Cheng C.Y."/>
            <person name="Krishnakumar V."/>
            <person name="Chan A.P."/>
            <person name="Thibaud-Nissen F."/>
            <person name="Schobel S."/>
            <person name="Town C.D."/>
        </authorList>
    </citation>
    <scope>GENOME REANNOTATION</scope>
    <source>
        <strain>cv. Columbia</strain>
    </source>
</reference>
<reference key="4">
    <citation type="journal article" date="2003" name="Science">
        <title>Empirical analysis of transcriptional activity in the Arabidopsis genome.</title>
        <authorList>
            <person name="Yamada K."/>
            <person name="Lim J."/>
            <person name="Dale J.M."/>
            <person name="Chen H."/>
            <person name="Shinn P."/>
            <person name="Palm C.J."/>
            <person name="Southwick A.M."/>
            <person name="Wu H.C."/>
            <person name="Kim C.J."/>
            <person name="Nguyen M."/>
            <person name="Pham P.K."/>
            <person name="Cheuk R.F."/>
            <person name="Karlin-Newmann G."/>
            <person name="Liu S.X."/>
            <person name="Lam B."/>
            <person name="Sakano H."/>
            <person name="Wu T."/>
            <person name="Yu G."/>
            <person name="Miranda M."/>
            <person name="Quach H.L."/>
            <person name="Tripp M."/>
            <person name="Chang C.H."/>
            <person name="Lee J.M."/>
            <person name="Toriumi M.J."/>
            <person name="Chan M.M."/>
            <person name="Tang C.C."/>
            <person name="Onodera C.S."/>
            <person name="Deng J.M."/>
            <person name="Akiyama K."/>
            <person name="Ansari Y."/>
            <person name="Arakawa T."/>
            <person name="Banh J."/>
            <person name="Banno F."/>
            <person name="Bowser L."/>
            <person name="Brooks S.Y."/>
            <person name="Carninci P."/>
            <person name="Chao Q."/>
            <person name="Choy N."/>
            <person name="Enju A."/>
            <person name="Goldsmith A.D."/>
            <person name="Gurjal M."/>
            <person name="Hansen N.F."/>
            <person name="Hayashizaki Y."/>
            <person name="Johnson-Hopson C."/>
            <person name="Hsuan V.W."/>
            <person name="Iida K."/>
            <person name="Karnes M."/>
            <person name="Khan S."/>
            <person name="Koesema E."/>
            <person name="Ishida J."/>
            <person name="Jiang P.X."/>
            <person name="Jones T."/>
            <person name="Kawai J."/>
            <person name="Kamiya A."/>
            <person name="Meyers C."/>
            <person name="Nakajima M."/>
            <person name="Narusaka M."/>
            <person name="Seki M."/>
            <person name="Sakurai T."/>
            <person name="Satou M."/>
            <person name="Tamse R."/>
            <person name="Vaysberg M."/>
            <person name="Wallender E.K."/>
            <person name="Wong C."/>
            <person name="Yamamura Y."/>
            <person name="Yuan S."/>
            <person name="Shinozaki K."/>
            <person name="Davis R.W."/>
            <person name="Theologis A."/>
            <person name="Ecker J.R."/>
        </authorList>
    </citation>
    <scope>NUCLEOTIDE SEQUENCE [LARGE SCALE MRNA]</scope>
    <source>
        <strain>cv. Columbia</strain>
    </source>
</reference>
<reference key="5">
    <citation type="submission" date="2002-03" db="EMBL/GenBank/DDBJ databases">
        <title>Full-length cDNA from Arabidopsis thaliana.</title>
        <authorList>
            <person name="Brover V.V."/>
            <person name="Troukhan M.E."/>
            <person name="Alexandrov N.A."/>
            <person name="Lu Y.-P."/>
            <person name="Flavell R.B."/>
            <person name="Feldmann K.A."/>
        </authorList>
    </citation>
    <scope>NUCLEOTIDE SEQUENCE [LARGE SCALE MRNA]</scope>
</reference>
<reference key="6">
    <citation type="journal article" date="2000" name="Arch. Biochem. Biophys.">
        <title>Ubiquitin-specific proteases from Arabidopsis thaliana: cloning of AtUBP5 and analysis of substrate specificity of AtUBP3, AtUBP4, and AtUBP5 using Escherichia coli in vivo and in vitro assays.</title>
        <authorList>
            <person name="Rao-Naik C."/>
            <person name="Chandler J.S."/>
            <person name="McArdle B."/>
            <person name="Callis J."/>
        </authorList>
    </citation>
    <scope>FUNCTION</scope>
</reference>
<reference key="7">
    <citation type="journal article" date="2000" name="Plant Physiol.">
        <title>The ubiquitin-specific protease family from Arabidopsis. AtUBP1 and 2 are required for the resistance to the amino acid analog canavanine.</title>
        <authorList>
            <person name="Yan N."/>
            <person name="Doelling J.H."/>
            <person name="Falbel T.G."/>
            <person name="Durski A.M."/>
            <person name="Vierstra R.D."/>
        </authorList>
    </citation>
    <scope>GENE FAMILY ORGANIZATION</scope>
    <scope>NOMENCLATURE</scope>
</reference>
<reference key="8">
    <citation type="journal article" date="2003" name="J. Biol. Chem.">
        <title>Unexpected protein families including cell defense components feature in the N-myristoylome of a higher eukaryote.</title>
        <authorList>
            <person name="Boisson B."/>
            <person name="Giglione C."/>
            <person name="Meinnel T."/>
        </authorList>
    </citation>
    <scope>MYRISTOYLATION AT GLY-2</scope>
</reference>
<reference key="9">
    <citation type="journal article" date="2007" name="Plant Physiol.">
        <title>The ubiquitin-specific protease subfamily UBP3/UBP4 is essential for pollen development and transmission in Arabidopsis.</title>
        <authorList>
            <person name="Doelling J.H."/>
            <person name="Phillips A.R."/>
            <person name="Soyler-Ogretim G."/>
            <person name="Wise J."/>
            <person name="Chandler J.S."/>
            <person name="Callis J."/>
            <person name="Otegui M.S."/>
            <person name="Vierstra R.D."/>
        </authorList>
    </citation>
    <scope>FUNCTION</scope>
</reference>
<keyword id="KW-0025">Alternative splicing</keyword>
<keyword id="KW-0378">Hydrolase</keyword>
<keyword id="KW-0449">Lipoprotein</keyword>
<keyword id="KW-0519">Myristate</keyword>
<keyword id="KW-0539">Nucleus</keyword>
<keyword id="KW-0645">Protease</keyword>
<keyword id="KW-1185">Reference proteome</keyword>
<keyword id="KW-0788">Thiol protease</keyword>
<keyword id="KW-0833">Ubl conjugation pathway</keyword>
<accession>Q8LAM0</accession>
<accession>O24455</accession>
<sequence>MGAAGSKLEKALGDQFPEGERYFGFENFGNTCYCNSVLQALYFCAPFREQLLEHYANNKADAEENLLTCLADLFSQISSQKKKTGVIAPKRFVQRLKKQNELFRSYMHQDAHEFLNYLLNELVEILEKETQATKADNETSSSPEKIANVLKAPLANGVHKEPIVTWVHKIFQGILTNETRCLRCETVTARDETFLDLSLDIEQNSSITSCLKNFSSTETLHAEDKFFCDKCCSLQEAQKRMKIKKPPHILVIHLKRFKYMEQLGRYKKLSYRVVFPLELKLSNTVDEYVDIEYSLFAVVVHVGSGPNHGHYVSLVKSHNHWLFFDDESVEIIEESAVQTFFGSSQEYSSNTDHGYILLYESLGTR</sequence>
<organism>
    <name type="scientific">Arabidopsis thaliana</name>
    <name type="common">Mouse-ear cress</name>
    <dbReference type="NCBI Taxonomy" id="3702"/>
    <lineage>
        <taxon>Eukaryota</taxon>
        <taxon>Viridiplantae</taxon>
        <taxon>Streptophyta</taxon>
        <taxon>Embryophyta</taxon>
        <taxon>Tracheophyta</taxon>
        <taxon>Spermatophyta</taxon>
        <taxon>Magnoliopsida</taxon>
        <taxon>eudicotyledons</taxon>
        <taxon>Gunneridae</taxon>
        <taxon>Pentapetalae</taxon>
        <taxon>rosids</taxon>
        <taxon>malvids</taxon>
        <taxon>Brassicales</taxon>
        <taxon>Brassicaceae</taxon>
        <taxon>Camelineae</taxon>
        <taxon>Arabidopsis</taxon>
    </lineage>
</organism>
<name>UBP4_ARATH</name>
<evidence type="ECO:0000255" key="1"/>
<evidence type="ECO:0000255" key="2">
    <source>
        <dbReference type="PROSITE-ProRule" id="PRU10092"/>
    </source>
</evidence>
<evidence type="ECO:0000255" key="3">
    <source>
        <dbReference type="PROSITE-ProRule" id="PRU10093"/>
    </source>
</evidence>
<evidence type="ECO:0000269" key="4">
    <source>
    </source>
</evidence>
<evidence type="ECO:0000269" key="5">
    <source>
    </source>
</evidence>
<evidence type="ECO:0000269" key="6">
    <source>
    </source>
</evidence>
<evidence type="ECO:0000269" key="7">
    <source>
    </source>
</evidence>
<evidence type="ECO:0000305" key="8"/>
<feature type="initiator methionine" description="Removed" evidence="1">
    <location>
        <position position="1"/>
    </location>
</feature>
<feature type="chain" id="PRO_0000080695" description="Ubiquitin carboxyl-terminal hydrolase 4">
    <location>
        <begin position="2"/>
        <end position="365"/>
    </location>
</feature>
<feature type="domain" description="USP">
    <location>
        <begin position="23"/>
        <end position="362"/>
    </location>
</feature>
<feature type="short sequence motif" description="Bipartite nuclear localization signal" evidence="1">
    <location>
        <begin position="81"/>
        <end position="98"/>
    </location>
</feature>
<feature type="active site" description="Nucleophile">
    <location>
        <position position="32"/>
    </location>
</feature>
<feature type="active site" description="Proton acceptor" evidence="2 3">
    <location>
        <position position="310"/>
    </location>
</feature>
<feature type="lipid moiety-binding region" description="N-myristoyl glycine" evidence="5">
    <location>
        <position position="2"/>
    </location>
</feature>
<feature type="mutagenesis site" description="Loss of activity." evidence="7">
    <original>C</original>
    <variation>S</variation>
    <location>
        <position position="32"/>
    </location>
</feature>
<feature type="sequence conflict" description="In Ref. 5; AAM65268." evidence="8" ref="5">
    <original>Q</original>
    <variation>K</variation>
    <location>
        <position position="172"/>
    </location>
</feature>
<feature type="sequence conflict" description="In Ref. 5; AAM65268." evidence="8" ref="5">
    <original>E</original>
    <variation>K</variation>
    <location>
        <position position="334"/>
    </location>
</feature>